<gene>
    <name evidence="1" type="primary">lldD</name>
    <name type="ordered locus">XOO0022</name>
</gene>
<dbReference type="EC" id="1.1.-.-" evidence="1"/>
<dbReference type="EMBL" id="AP008229">
    <property type="protein sequence ID" value="BAE66777.1"/>
    <property type="molecule type" value="Genomic_DNA"/>
</dbReference>
<dbReference type="RefSeq" id="WP_011257025.1">
    <property type="nucleotide sequence ID" value="NC_007705.1"/>
</dbReference>
<dbReference type="SMR" id="Q2P9K0"/>
<dbReference type="KEGG" id="xom:XOO0022"/>
<dbReference type="HOGENOM" id="CLU_020639_0_0_6"/>
<dbReference type="GO" id="GO:0005886">
    <property type="term" value="C:plasma membrane"/>
    <property type="evidence" value="ECO:0007669"/>
    <property type="project" value="UniProtKB-SubCell"/>
</dbReference>
<dbReference type="GO" id="GO:0010181">
    <property type="term" value="F:FMN binding"/>
    <property type="evidence" value="ECO:0007669"/>
    <property type="project" value="InterPro"/>
</dbReference>
<dbReference type="GO" id="GO:0004459">
    <property type="term" value="F:L-lactate dehydrogenase activity"/>
    <property type="evidence" value="ECO:0007669"/>
    <property type="project" value="UniProtKB-UniRule"/>
</dbReference>
<dbReference type="GO" id="GO:0009060">
    <property type="term" value="P:aerobic respiration"/>
    <property type="evidence" value="ECO:0007669"/>
    <property type="project" value="TreeGrafter"/>
</dbReference>
<dbReference type="GO" id="GO:0006089">
    <property type="term" value="P:lactate metabolic process"/>
    <property type="evidence" value="ECO:0007669"/>
    <property type="project" value="UniProtKB-UniRule"/>
</dbReference>
<dbReference type="CDD" id="cd02809">
    <property type="entry name" value="alpha_hydroxyacid_oxid_FMN"/>
    <property type="match status" value="1"/>
</dbReference>
<dbReference type="FunFam" id="3.20.20.70:FF:000029">
    <property type="entry name" value="L-lactate dehydrogenase"/>
    <property type="match status" value="1"/>
</dbReference>
<dbReference type="Gene3D" id="3.20.20.70">
    <property type="entry name" value="Aldolase class I"/>
    <property type="match status" value="1"/>
</dbReference>
<dbReference type="HAMAP" id="MF_01559">
    <property type="entry name" value="L_lact_dehydr"/>
    <property type="match status" value="1"/>
</dbReference>
<dbReference type="InterPro" id="IPR013785">
    <property type="entry name" value="Aldolase_TIM"/>
</dbReference>
<dbReference type="InterPro" id="IPR012133">
    <property type="entry name" value="Alpha-hydoxy_acid_DH_FMN"/>
</dbReference>
<dbReference type="InterPro" id="IPR000262">
    <property type="entry name" value="FMN-dep_DH"/>
</dbReference>
<dbReference type="InterPro" id="IPR037396">
    <property type="entry name" value="FMN_HAD"/>
</dbReference>
<dbReference type="InterPro" id="IPR008259">
    <property type="entry name" value="FMN_hydac_DH_AS"/>
</dbReference>
<dbReference type="InterPro" id="IPR020920">
    <property type="entry name" value="LldD"/>
</dbReference>
<dbReference type="NCBIfam" id="NF033901">
    <property type="entry name" value="L_lactate_LldD"/>
    <property type="match status" value="1"/>
</dbReference>
<dbReference type="NCBIfam" id="NF008398">
    <property type="entry name" value="PRK11197.1"/>
    <property type="match status" value="1"/>
</dbReference>
<dbReference type="PANTHER" id="PTHR10578:SF85">
    <property type="entry name" value="L-LACTATE DEHYDROGENASE"/>
    <property type="match status" value="1"/>
</dbReference>
<dbReference type="PANTHER" id="PTHR10578">
    <property type="entry name" value="S -2-HYDROXY-ACID OXIDASE-RELATED"/>
    <property type="match status" value="1"/>
</dbReference>
<dbReference type="Pfam" id="PF01070">
    <property type="entry name" value="FMN_dh"/>
    <property type="match status" value="1"/>
</dbReference>
<dbReference type="PIRSF" id="PIRSF000138">
    <property type="entry name" value="Al-hdrx_acd_dh"/>
    <property type="match status" value="1"/>
</dbReference>
<dbReference type="SUPFAM" id="SSF51395">
    <property type="entry name" value="FMN-linked oxidoreductases"/>
    <property type="match status" value="1"/>
</dbReference>
<dbReference type="PROSITE" id="PS00557">
    <property type="entry name" value="FMN_HYDROXY_ACID_DH_1"/>
    <property type="match status" value="1"/>
</dbReference>
<dbReference type="PROSITE" id="PS51349">
    <property type="entry name" value="FMN_HYDROXY_ACID_DH_2"/>
    <property type="match status" value="1"/>
</dbReference>
<feature type="chain" id="PRO_1000068995" description="L-lactate dehydrogenase">
    <location>
        <begin position="1"/>
        <end position="388"/>
    </location>
</feature>
<feature type="domain" description="FMN hydroxy acid dehydrogenase" evidence="1">
    <location>
        <begin position="1"/>
        <end position="380"/>
    </location>
</feature>
<feature type="active site" description="Proton acceptor" evidence="1">
    <location>
        <position position="275"/>
    </location>
</feature>
<feature type="binding site" evidence="1">
    <location>
        <position position="24"/>
    </location>
    <ligand>
        <name>substrate</name>
    </ligand>
</feature>
<feature type="binding site" evidence="1">
    <location>
        <position position="106"/>
    </location>
    <ligand>
        <name>FMN</name>
        <dbReference type="ChEBI" id="CHEBI:58210"/>
    </ligand>
</feature>
<feature type="binding site" evidence="1">
    <location>
        <position position="127"/>
    </location>
    <ligand>
        <name>FMN</name>
        <dbReference type="ChEBI" id="CHEBI:58210"/>
    </ligand>
</feature>
<feature type="binding site" evidence="1">
    <location>
        <position position="129"/>
    </location>
    <ligand>
        <name>substrate</name>
    </ligand>
</feature>
<feature type="binding site" evidence="1">
    <location>
        <position position="155"/>
    </location>
    <ligand>
        <name>FMN</name>
        <dbReference type="ChEBI" id="CHEBI:58210"/>
    </ligand>
</feature>
<feature type="binding site" evidence="1">
    <location>
        <position position="164"/>
    </location>
    <ligand>
        <name>substrate</name>
    </ligand>
</feature>
<feature type="binding site" evidence="1">
    <location>
        <position position="251"/>
    </location>
    <ligand>
        <name>FMN</name>
        <dbReference type="ChEBI" id="CHEBI:58210"/>
    </ligand>
</feature>
<feature type="binding site" evidence="1">
    <location>
        <position position="278"/>
    </location>
    <ligand>
        <name>substrate</name>
    </ligand>
</feature>
<feature type="binding site" evidence="1">
    <location>
        <begin position="306"/>
        <end position="330"/>
    </location>
    <ligand>
        <name>FMN</name>
        <dbReference type="ChEBI" id="CHEBI:58210"/>
    </ligand>
</feature>
<keyword id="KW-0997">Cell inner membrane</keyword>
<keyword id="KW-1003">Cell membrane</keyword>
<keyword id="KW-0285">Flavoprotein</keyword>
<keyword id="KW-0288">FMN</keyword>
<keyword id="KW-0472">Membrane</keyword>
<keyword id="KW-0560">Oxidoreductase</keyword>
<protein>
    <recommendedName>
        <fullName evidence="1">L-lactate dehydrogenase</fullName>
        <ecNumber evidence="1">1.1.-.-</ecNumber>
    </recommendedName>
</protein>
<reference key="1">
    <citation type="journal article" date="2005" name="Jpn. Agric. Res. Q.">
        <title>Genome sequence of Xanthomonas oryzae pv. oryzae suggests contribution of large numbers of effector genes and insertion sequences to its race diversity.</title>
        <authorList>
            <person name="Ochiai H."/>
            <person name="Inoue Y."/>
            <person name="Takeya M."/>
            <person name="Sasaki A."/>
            <person name="Kaku H."/>
        </authorList>
    </citation>
    <scope>NUCLEOTIDE SEQUENCE [LARGE SCALE GENOMIC DNA]</scope>
    <source>
        <strain>MAFF 311018</strain>
    </source>
</reference>
<accession>Q2P9K0</accession>
<proteinExistence type="inferred from homology"/>
<sequence>MIISAASDYRAAAQARLPPFLFHYIDGGAYAEHTLRRNVSDLADVALRQRVLRNMSDLRLSTELFGETLAMPVALGPVGLTGMYARRGEVQAARAAAARGIPFTLSTVSVCPIEEVAPAIERPMWFQLYVLKDRGFMRNALERAKAAGVTTLVFTVDMPTPGARYRDAHSGMSGPNASLRRMLQAVTHPRWAWDVGVLGKPHDLGNISAYRGNPTGLQDYIGWLGANFDPSIAWKDLEWIREFWTGPMVIKGILDPEDARDAVRFGADGIVVSNHGGRQLDGVLSSARALPAIADAVKGELKILADSGIRSGLDVVRMLALGADAVLLGRAFVYALAADGQAGVENLLTLIEKEMRVAMTLTGTHSIAQISADALSRVTREQANAVSP</sequence>
<comment type="function">
    <text evidence="1">Catalyzes the conversion of L-lactate to pyruvate. Is coupled to the respiratory chain.</text>
</comment>
<comment type="catalytic activity">
    <reaction evidence="1">
        <text>(S)-lactate + A = pyruvate + AH2</text>
        <dbReference type="Rhea" id="RHEA:45816"/>
        <dbReference type="ChEBI" id="CHEBI:13193"/>
        <dbReference type="ChEBI" id="CHEBI:15361"/>
        <dbReference type="ChEBI" id="CHEBI:16651"/>
        <dbReference type="ChEBI" id="CHEBI:17499"/>
    </reaction>
</comment>
<comment type="cofactor">
    <cofactor evidence="1">
        <name>FMN</name>
        <dbReference type="ChEBI" id="CHEBI:58210"/>
    </cofactor>
</comment>
<comment type="subcellular location">
    <subcellularLocation>
        <location evidence="1">Cell inner membrane</location>
        <topology evidence="1">Peripheral membrane protein</topology>
    </subcellularLocation>
</comment>
<comment type="similarity">
    <text evidence="1">Belongs to the FMN-dependent alpha-hydroxy acid dehydrogenase family.</text>
</comment>
<evidence type="ECO:0000255" key="1">
    <source>
        <dbReference type="HAMAP-Rule" id="MF_01559"/>
    </source>
</evidence>
<organism>
    <name type="scientific">Xanthomonas oryzae pv. oryzae (strain MAFF 311018)</name>
    <dbReference type="NCBI Taxonomy" id="342109"/>
    <lineage>
        <taxon>Bacteria</taxon>
        <taxon>Pseudomonadati</taxon>
        <taxon>Pseudomonadota</taxon>
        <taxon>Gammaproteobacteria</taxon>
        <taxon>Lysobacterales</taxon>
        <taxon>Lysobacteraceae</taxon>
        <taxon>Xanthomonas</taxon>
    </lineage>
</organism>
<name>LLDD_XANOM</name>